<feature type="chain" id="PRO_0000158876" description="Adenylate kinase">
    <location>
        <begin position="1"/>
        <end position="221"/>
    </location>
</feature>
<feature type="region of interest" description="NMP" evidence="1">
    <location>
        <begin position="30"/>
        <end position="59"/>
    </location>
</feature>
<feature type="region of interest" description="LID" evidence="1">
    <location>
        <begin position="126"/>
        <end position="163"/>
    </location>
</feature>
<feature type="binding site" evidence="1">
    <location>
        <begin position="10"/>
        <end position="15"/>
    </location>
    <ligand>
        <name>ATP</name>
        <dbReference type="ChEBI" id="CHEBI:30616"/>
    </ligand>
</feature>
<feature type="binding site" evidence="1">
    <location>
        <position position="31"/>
    </location>
    <ligand>
        <name>AMP</name>
        <dbReference type="ChEBI" id="CHEBI:456215"/>
    </ligand>
</feature>
<feature type="binding site" evidence="1">
    <location>
        <position position="36"/>
    </location>
    <ligand>
        <name>AMP</name>
        <dbReference type="ChEBI" id="CHEBI:456215"/>
    </ligand>
</feature>
<feature type="binding site" evidence="1">
    <location>
        <begin position="57"/>
        <end position="59"/>
    </location>
    <ligand>
        <name>AMP</name>
        <dbReference type="ChEBI" id="CHEBI:456215"/>
    </ligand>
</feature>
<feature type="binding site" evidence="1">
    <location>
        <begin position="85"/>
        <end position="88"/>
    </location>
    <ligand>
        <name>AMP</name>
        <dbReference type="ChEBI" id="CHEBI:456215"/>
    </ligand>
</feature>
<feature type="binding site" evidence="1">
    <location>
        <position position="92"/>
    </location>
    <ligand>
        <name>AMP</name>
        <dbReference type="ChEBI" id="CHEBI:456215"/>
    </ligand>
</feature>
<feature type="binding site" evidence="1">
    <location>
        <position position="127"/>
    </location>
    <ligand>
        <name>ATP</name>
        <dbReference type="ChEBI" id="CHEBI:30616"/>
    </ligand>
</feature>
<feature type="binding site" evidence="1">
    <location>
        <position position="130"/>
    </location>
    <ligand>
        <name>Zn(2+)</name>
        <dbReference type="ChEBI" id="CHEBI:29105"/>
        <note>structural</note>
    </ligand>
</feature>
<feature type="binding site" evidence="1">
    <location>
        <position position="133"/>
    </location>
    <ligand>
        <name>Zn(2+)</name>
        <dbReference type="ChEBI" id="CHEBI:29105"/>
        <note>structural</note>
    </ligand>
</feature>
<feature type="binding site" evidence="1">
    <location>
        <begin position="136"/>
        <end position="137"/>
    </location>
    <ligand>
        <name>ATP</name>
        <dbReference type="ChEBI" id="CHEBI:30616"/>
    </ligand>
</feature>
<feature type="binding site" evidence="1">
    <location>
        <position position="150"/>
    </location>
    <ligand>
        <name>Zn(2+)</name>
        <dbReference type="ChEBI" id="CHEBI:29105"/>
        <note>structural</note>
    </ligand>
</feature>
<feature type="binding site" evidence="1">
    <location>
        <position position="153"/>
    </location>
    <ligand>
        <name>Zn(2+)</name>
        <dbReference type="ChEBI" id="CHEBI:29105"/>
        <note>structural</note>
    </ligand>
</feature>
<feature type="binding site" evidence="1">
    <location>
        <position position="160"/>
    </location>
    <ligand>
        <name>AMP</name>
        <dbReference type="ChEBI" id="CHEBI:456215"/>
    </ligand>
</feature>
<feature type="binding site" evidence="1">
    <location>
        <position position="171"/>
    </location>
    <ligand>
        <name>AMP</name>
        <dbReference type="ChEBI" id="CHEBI:456215"/>
    </ligand>
</feature>
<feature type="binding site" evidence="1">
    <location>
        <position position="199"/>
    </location>
    <ligand>
        <name>ATP</name>
        <dbReference type="ChEBI" id="CHEBI:30616"/>
    </ligand>
</feature>
<gene>
    <name evidence="1" type="primary">adk</name>
    <name type="ordered locus">TTE2271</name>
</gene>
<dbReference type="EC" id="2.7.4.3" evidence="1"/>
<dbReference type="EMBL" id="AE008691">
    <property type="protein sequence ID" value="AAM25415.1"/>
    <property type="molecule type" value="Genomic_DNA"/>
</dbReference>
<dbReference type="RefSeq" id="WP_011026318.1">
    <property type="nucleotide sequence ID" value="NC_003869.1"/>
</dbReference>
<dbReference type="SMR" id="Q8R7X4"/>
<dbReference type="STRING" id="273068.TTE2271"/>
<dbReference type="KEGG" id="tte:TTE2271"/>
<dbReference type="eggNOG" id="COG0563">
    <property type="taxonomic scope" value="Bacteria"/>
</dbReference>
<dbReference type="HOGENOM" id="CLU_032354_1_2_9"/>
<dbReference type="OrthoDB" id="9805030at2"/>
<dbReference type="UniPathway" id="UPA00588">
    <property type="reaction ID" value="UER00649"/>
</dbReference>
<dbReference type="Proteomes" id="UP000000555">
    <property type="component" value="Chromosome"/>
</dbReference>
<dbReference type="GO" id="GO:0005737">
    <property type="term" value="C:cytoplasm"/>
    <property type="evidence" value="ECO:0007669"/>
    <property type="project" value="UniProtKB-SubCell"/>
</dbReference>
<dbReference type="GO" id="GO:0004017">
    <property type="term" value="F:adenylate kinase activity"/>
    <property type="evidence" value="ECO:0007669"/>
    <property type="project" value="UniProtKB-UniRule"/>
</dbReference>
<dbReference type="GO" id="GO:0005524">
    <property type="term" value="F:ATP binding"/>
    <property type="evidence" value="ECO:0007669"/>
    <property type="project" value="UniProtKB-UniRule"/>
</dbReference>
<dbReference type="GO" id="GO:0008270">
    <property type="term" value="F:zinc ion binding"/>
    <property type="evidence" value="ECO:0007669"/>
    <property type="project" value="UniProtKB-UniRule"/>
</dbReference>
<dbReference type="GO" id="GO:0044209">
    <property type="term" value="P:AMP salvage"/>
    <property type="evidence" value="ECO:0007669"/>
    <property type="project" value="UniProtKB-UniRule"/>
</dbReference>
<dbReference type="CDD" id="cd01428">
    <property type="entry name" value="ADK"/>
    <property type="match status" value="1"/>
</dbReference>
<dbReference type="FunFam" id="3.40.50.300:FF:000106">
    <property type="entry name" value="Adenylate kinase mitochondrial"/>
    <property type="match status" value="1"/>
</dbReference>
<dbReference type="Gene3D" id="3.40.50.300">
    <property type="entry name" value="P-loop containing nucleotide triphosphate hydrolases"/>
    <property type="match status" value="1"/>
</dbReference>
<dbReference type="HAMAP" id="MF_00235">
    <property type="entry name" value="Adenylate_kinase_Adk"/>
    <property type="match status" value="1"/>
</dbReference>
<dbReference type="InterPro" id="IPR006259">
    <property type="entry name" value="Adenyl_kin_sub"/>
</dbReference>
<dbReference type="InterPro" id="IPR000850">
    <property type="entry name" value="Adenylat/UMP-CMP_kin"/>
</dbReference>
<dbReference type="InterPro" id="IPR033690">
    <property type="entry name" value="Adenylat_kinase_CS"/>
</dbReference>
<dbReference type="InterPro" id="IPR007862">
    <property type="entry name" value="Adenylate_kinase_lid-dom"/>
</dbReference>
<dbReference type="InterPro" id="IPR027417">
    <property type="entry name" value="P-loop_NTPase"/>
</dbReference>
<dbReference type="NCBIfam" id="TIGR01351">
    <property type="entry name" value="adk"/>
    <property type="match status" value="1"/>
</dbReference>
<dbReference type="NCBIfam" id="NF001380">
    <property type="entry name" value="PRK00279.1-2"/>
    <property type="match status" value="1"/>
</dbReference>
<dbReference type="NCBIfam" id="NF001381">
    <property type="entry name" value="PRK00279.1-3"/>
    <property type="match status" value="1"/>
</dbReference>
<dbReference type="NCBIfam" id="NF011100">
    <property type="entry name" value="PRK14527.1"/>
    <property type="match status" value="1"/>
</dbReference>
<dbReference type="PANTHER" id="PTHR23359">
    <property type="entry name" value="NUCLEOTIDE KINASE"/>
    <property type="match status" value="1"/>
</dbReference>
<dbReference type="Pfam" id="PF00406">
    <property type="entry name" value="ADK"/>
    <property type="match status" value="1"/>
</dbReference>
<dbReference type="Pfam" id="PF05191">
    <property type="entry name" value="ADK_lid"/>
    <property type="match status" value="1"/>
</dbReference>
<dbReference type="PRINTS" id="PR00094">
    <property type="entry name" value="ADENYLTKNASE"/>
</dbReference>
<dbReference type="SUPFAM" id="SSF52540">
    <property type="entry name" value="P-loop containing nucleoside triphosphate hydrolases"/>
    <property type="match status" value="1"/>
</dbReference>
<dbReference type="PROSITE" id="PS00113">
    <property type="entry name" value="ADENYLATE_KINASE"/>
    <property type="match status" value="1"/>
</dbReference>
<organism>
    <name type="scientific">Caldanaerobacter subterraneus subsp. tengcongensis (strain DSM 15242 / JCM 11007 / NBRC 100824 / MB4)</name>
    <name type="common">Thermoanaerobacter tengcongensis</name>
    <dbReference type="NCBI Taxonomy" id="273068"/>
    <lineage>
        <taxon>Bacteria</taxon>
        <taxon>Bacillati</taxon>
        <taxon>Bacillota</taxon>
        <taxon>Clostridia</taxon>
        <taxon>Thermoanaerobacterales</taxon>
        <taxon>Thermoanaerobacteraceae</taxon>
        <taxon>Caldanaerobacter</taxon>
    </lineage>
</organism>
<comment type="function">
    <text evidence="1">Catalyzes the reversible transfer of the terminal phosphate group between ATP and AMP. Plays an important role in cellular energy homeostasis and in adenine nucleotide metabolism.</text>
</comment>
<comment type="catalytic activity">
    <reaction evidence="1">
        <text>AMP + ATP = 2 ADP</text>
        <dbReference type="Rhea" id="RHEA:12973"/>
        <dbReference type="ChEBI" id="CHEBI:30616"/>
        <dbReference type="ChEBI" id="CHEBI:456215"/>
        <dbReference type="ChEBI" id="CHEBI:456216"/>
        <dbReference type="EC" id="2.7.4.3"/>
    </reaction>
</comment>
<comment type="pathway">
    <text evidence="1">Purine metabolism; AMP biosynthesis via salvage pathway; AMP from ADP: step 1/1.</text>
</comment>
<comment type="subunit">
    <text evidence="1">Monomer.</text>
</comment>
<comment type="subcellular location">
    <subcellularLocation>
        <location evidence="1">Cytoplasm</location>
    </subcellularLocation>
</comment>
<comment type="domain">
    <text evidence="1">Consists of three domains, a large central CORE domain and two small peripheral domains, NMPbind and LID, which undergo movements during catalysis. The LID domain closes over the site of phosphoryl transfer upon ATP binding. Assembling and dissambling the active center during each catalytic cycle provides an effective means to prevent ATP hydrolysis. Some bacteria have evolved a zinc-coordinating structure that stabilizes the LID domain.</text>
</comment>
<comment type="similarity">
    <text evidence="1">Belongs to the adenylate kinase family.</text>
</comment>
<evidence type="ECO:0000255" key="1">
    <source>
        <dbReference type="HAMAP-Rule" id="MF_00235"/>
    </source>
</evidence>
<name>KAD_CALS4</name>
<protein>
    <recommendedName>
        <fullName evidence="1">Adenylate kinase</fullName>
        <shortName evidence="1">AK</shortName>
        <ecNumber evidence="1">2.7.4.3</ecNumber>
    </recommendedName>
    <alternativeName>
        <fullName evidence="1">ATP-AMP transphosphorylase</fullName>
    </alternativeName>
    <alternativeName>
        <fullName evidence="1">ATP:AMP phosphotransferase</fullName>
    </alternativeName>
    <alternativeName>
        <fullName evidence="1">Adenylate monophosphate kinase</fullName>
    </alternativeName>
</protein>
<sequence length="221" mass="25032">MRVVLLGPPGAGKGTQALKIAKEFDIPHISTGDIFRQNLRDNTELGKLAKEYMDKGLLVPDEVTNRIVEDRLEKEDCKKGFLLDGYPRNIPQAEELDKFLEERGHSLTAVINIQVEREALIDRITGRRVCPVCGATYHIKTSPPKVDNVCDKCGSELIQRSDDKLESVVKRLEVYEKETKPLIDYYTKKGILVNIDGNKSIDEVFEDIKKALLGDRRDDIH</sequence>
<proteinExistence type="inferred from homology"/>
<accession>Q8R7X4</accession>
<reference key="1">
    <citation type="journal article" date="2002" name="Genome Res.">
        <title>A complete sequence of the T. tengcongensis genome.</title>
        <authorList>
            <person name="Bao Q."/>
            <person name="Tian Y."/>
            <person name="Li W."/>
            <person name="Xu Z."/>
            <person name="Xuan Z."/>
            <person name="Hu S."/>
            <person name="Dong W."/>
            <person name="Yang J."/>
            <person name="Chen Y."/>
            <person name="Xue Y."/>
            <person name="Xu Y."/>
            <person name="Lai X."/>
            <person name="Huang L."/>
            <person name="Dong X."/>
            <person name="Ma Y."/>
            <person name="Ling L."/>
            <person name="Tan H."/>
            <person name="Chen R."/>
            <person name="Wang J."/>
            <person name="Yu J."/>
            <person name="Yang H."/>
        </authorList>
    </citation>
    <scope>NUCLEOTIDE SEQUENCE [LARGE SCALE GENOMIC DNA]</scope>
    <source>
        <strain>DSM 15242 / JCM 11007 / NBRC 100824 / MB4</strain>
    </source>
</reference>
<keyword id="KW-0067">ATP-binding</keyword>
<keyword id="KW-0963">Cytoplasm</keyword>
<keyword id="KW-0418">Kinase</keyword>
<keyword id="KW-0479">Metal-binding</keyword>
<keyword id="KW-0545">Nucleotide biosynthesis</keyword>
<keyword id="KW-0547">Nucleotide-binding</keyword>
<keyword id="KW-1185">Reference proteome</keyword>
<keyword id="KW-0808">Transferase</keyword>
<keyword id="KW-0862">Zinc</keyword>